<reference key="1">
    <citation type="journal article" date="2011" name="J. Bacteriol.">
        <title>Complete genome sequence of the plant growth-promoting endophyte Burkholderia phytofirmans strain PsJN.</title>
        <authorList>
            <person name="Weilharter A."/>
            <person name="Mitter B."/>
            <person name="Shin M.V."/>
            <person name="Chain P.S."/>
            <person name="Nowak J."/>
            <person name="Sessitsch A."/>
        </authorList>
    </citation>
    <scope>NUCLEOTIDE SEQUENCE [LARGE SCALE GENOMIC DNA]</scope>
    <source>
        <strain>DSM 17436 / LMG 22146 / PsJN</strain>
    </source>
</reference>
<dbReference type="EMBL" id="CP001052">
    <property type="protein sequence ID" value="ACD18017.1"/>
    <property type="molecule type" value="Genomic_DNA"/>
</dbReference>
<dbReference type="RefSeq" id="WP_006052219.1">
    <property type="nucleotide sequence ID" value="NC_010681.1"/>
</dbReference>
<dbReference type="SMR" id="B2T734"/>
<dbReference type="STRING" id="398527.Bphyt_3627"/>
<dbReference type="GeneID" id="97311009"/>
<dbReference type="KEGG" id="bpy:Bphyt_3627"/>
<dbReference type="eggNOG" id="COG0098">
    <property type="taxonomic scope" value="Bacteria"/>
</dbReference>
<dbReference type="HOGENOM" id="CLU_065898_2_2_4"/>
<dbReference type="OrthoDB" id="9809045at2"/>
<dbReference type="Proteomes" id="UP000001739">
    <property type="component" value="Chromosome 1"/>
</dbReference>
<dbReference type="GO" id="GO:0015935">
    <property type="term" value="C:small ribosomal subunit"/>
    <property type="evidence" value="ECO:0007669"/>
    <property type="project" value="InterPro"/>
</dbReference>
<dbReference type="GO" id="GO:0019843">
    <property type="term" value="F:rRNA binding"/>
    <property type="evidence" value="ECO:0007669"/>
    <property type="project" value="UniProtKB-UniRule"/>
</dbReference>
<dbReference type="GO" id="GO:0003735">
    <property type="term" value="F:structural constituent of ribosome"/>
    <property type="evidence" value="ECO:0007669"/>
    <property type="project" value="InterPro"/>
</dbReference>
<dbReference type="GO" id="GO:0006412">
    <property type="term" value="P:translation"/>
    <property type="evidence" value="ECO:0007669"/>
    <property type="project" value="UniProtKB-UniRule"/>
</dbReference>
<dbReference type="FunFam" id="3.30.160.20:FF:000001">
    <property type="entry name" value="30S ribosomal protein S5"/>
    <property type="match status" value="1"/>
</dbReference>
<dbReference type="FunFam" id="3.30.230.10:FF:000002">
    <property type="entry name" value="30S ribosomal protein S5"/>
    <property type="match status" value="1"/>
</dbReference>
<dbReference type="Gene3D" id="3.30.160.20">
    <property type="match status" value="1"/>
</dbReference>
<dbReference type="Gene3D" id="3.30.230.10">
    <property type="match status" value="1"/>
</dbReference>
<dbReference type="HAMAP" id="MF_01307_B">
    <property type="entry name" value="Ribosomal_uS5_B"/>
    <property type="match status" value="1"/>
</dbReference>
<dbReference type="InterPro" id="IPR020568">
    <property type="entry name" value="Ribosomal_Su5_D2-typ_SF"/>
</dbReference>
<dbReference type="InterPro" id="IPR000851">
    <property type="entry name" value="Ribosomal_uS5"/>
</dbReference>
<dbReference type="InterPro" id="IPR005712">
    <property type="entry name" value="Ribosomal_uS5_bac-type"/>
</dbReference>
<dbReference type="InterPro" id="IPR005324">
    <property type="entry name" value="Ribosomal_uS5_C"/>
</dbReference>
<dbReference type="InterPro" id="IPR013810">
    <property type="entry name" value="Ribosomal_uS5_N"/>
</dbReference>
<dbReference type="InterPro" id="IPR018192">
    <property type="entry name" value="Ribosomal_uS5_N_CS"/>
</dbReference>
<dbReference type="InterPro" id="IPR014721">
    <property type="entry name" value="Ribsml_uS5_D2-typ_fold_subgr"/>
</dbReference>
<dbReference type="NCBIfam" id="TIGR01021">
    <property type="entry name" value="rpsE_bact"/>
    <property type="match status" value="1"/>
</dbReference>
<dbReference type="PANTHER" id="PTHR48277">
    <property type="entry name" value="MITOCHONDRIAL RIBOSOMAL PROTEIN S5"/>
    <property type="match status" value="1"/>
</dbReference>
<dbReference type="PANTHER" id="PTHR48277:SF1">
    <property type="entry name" value="MITOCHONDRIAL RIBOSOMAL PROTEIN S5"/>
    <property type="match status" value="1"/>
</dbReference>
<dbReference type="Pfam" id="PF00333">
    <property type="entry name" value="Ribosomal_S5"/>
    <property type="match status" value="1"/>
</dbReference>
<dbReference type="Pfam" id="PF03719">
    <property type="entry name" value="Ribosomal_S5_C"/>
    <property type="match status" value="1"/>
</dbReference>
<dbReference type="SUPFAM" id="SSF54768">
    <property type="entry name" value="dsRNA-binding domain-like"/>
    <property type="match status" value="1"/>
</dbReference>
<dbReference type="SUPFAM" id="SSF54211">
    <property type="entry name" value="Ribosomal protein S5 domain 2-like"/>
    <property type="match status" value="1"/>
</dbReference>
<dbReference type="PROSITE" id="PS00585">
    <property type="entry name" value="RIBOSOMAL_S5"/>
    <property type="match status" value="1"/>
</dbReference>
<dbReference type="PROSITE" id="PS50881">
    <property type="entry name" value="S5_DSRBD"/>
    <property type="match status" value="1"/>
</dbReference>
<accession>B2T734</accession>
<feature type="chain" id="PRO_1000140845" description="Small ribosomal subunit protein uS5">
    <location>
        <begin position="1"/>
        <end position="172"/>
    </location>
</feature>
<feature type="domain" description="S5 DRBM" evidence="1">
    <location>
        <begin position="17"/>
        <end position="80"/>
    </location>
</feature>
<keyword id="KW-0687">Ribonucleoprotein</keyword>
<keyword id="KW-0689">Ribosomal protein</keyword>
<keyword id="KW-0694">RNA-binding</keyword>
<keyword id="KW-0699">rRNA-binding</keyword>
<comment type="function">
    <text evidence="1">With S4 and S12 plays an important role in translational accuracy.</text>
</comment>
<comment type="function">
    <text evidence="1">Located at the back of the 30S subunit body where it stabilizes the conformation of the head with respect to the body.</text>
</comment>
<comment type="subunit">
    <text evidence="1">Part of the 30S ribosomal subunit. Contacts proteins S4 and S8.</text>
</comment>
<comment type="domain">
    <text>The N-terminal domain interacts with the head of the 30S subunit; the C-terminal domain interacts with the body and contacts protein S4. The interaction surface between S4 and S5 is involved in control of translational fidelity.</text>
</comment>
<comment type="similarity">
    <text evidence="1">Belongs to the universal ribosomal protein uS5 family.</text>
</comment>
<gene>
    <name evidence="1" type="primary">rpsE</name>
    <name type="ordered locus">Bphyt_3627</name>
</gene>
<organism>
    <name type="scientific">Paraburkholderia phytofirmans (strain DSM 17436 / LMG 22146 / PsJN)</name>
    <name type="common">Burkholderia phytofirmans</name>
    <dbReference type="NCBI Taxonomy" id="398527"/>
    <lineage>
        <taxon>Bacteria</taxon>
        <taxon>Pseudomonadati</taxon>
        <taxon>Pseudomonadota</taxon>
        <taxon>Betaproteobacteria</taxon>
        <taxon>Burkholderiales</taxon>
        <taxon>Burkholderiaceae</taxon>
        <taxon>Paraburkholderia</taxon>
    </lineage>
</organism>
<evidence type="ECO:0000255" key="1">
    <source>
        <dbReference type="HAMAP-Rule" id="MF_01307"/>
    </source>
</evidence>
<evidence type="ECO:0000305" key="2"/>
<name>RS5_PARPJ</name>
<protein>
    <recommendedName>
        <fullName evidence="1">Small ribosomal subunit protein uS5</fullName>
    </recommendedName>
    <alternativeName>
        <fullName evidence="2">30S ribosomal protein S5</fullName>
    </alternativeName>
</protein>
<proteinExistence type="inferred from homology"/>
<sequence length="172" mass="18152">MAKMQAKVQADERDDGLREKMISVNRVTKVVKGGRILGFAALTVVGDGDGRVGMGKGKAKEVPVAVQKAMEQARRNMFKVPLKNGTLQHEVHGKHGASMVLLAPAKDGTGVIAGGPMRAVFDVMGVQNVVAKSHGSTNPYNLVRATLDGLRKQSTPGDIAAKRGKSVEDILG</sequence>